<protein>
    <recommendedName>
        <fullName evidence="1">Protein-glutamate methylesterase/protein-glutamine glutaminase</fullName>
        <ecNumber evidence="1">3.1.1.61</ecNumber>
        <ecNumber evidence="1">3.5.1.44</ecNumber>
    </recommendedName>
</protein>
<comment type="function">
    <text evidence="1">Involved in chemotaxis. Part of a chemotaxis signal transduction system that modulates chemotaxis in response to various stimuli. Catalyzes the demethylation of specific methylglutamate residues introduced into the chemoreceptors (methyl-accepting chemotaxis proteins or MCP) by CheR. Also mediates the irreversible deamidation of specific glutamine residues to glutamic acid.</text>
</comment>
<comment type="catalytic activity">
    <reaction evidence="1">
        <text>[protein]-L-glutamate 5-O-methyl ester + H2O = L-glutamyl-[protein] + methanol + H(+)</text>
        <dbReference type="Rhea" id="RHEA:23236"/>
        <dbReference type="Rhea" id="RHEA-COMP:10208"/>
        <dbReference type="Rhea" id="RHEA-COMP:10311"/>
        <dbReference type="ChEBI" id="CHEBI:15377"/>
        <dbReference type="ChEBI" id="CHEBI:15378"/>
        <dbReference type="ChEBI" id="CHEBI:17790"/>
        <dbReference type="ChEBI" id="CHEBI:29973"/>
        <dbReference type="ChEBI" id="CHEBI:82795"/>
        <dbReference type="EC" id="3.1.1.61"/>
    </reaction>
</comment>
<comment type="catalytic activity">
    <reaction evidence="1">
        <text>L-glutaminyl-[protein] + H2O = L-glutamyl-[protein] + NH4(+)</text>
        <dbReference type="Rhea" id="RHEA:16441"/>
        <dbReference type="Rhea" id="RHEA-COMP:10207"/>
        <dbReference type="Rhea" id="RHEA-COMP:10208"/>
        <dbReference type="ChEBI" id="CHEBI:15377"/>
        <dbReference type="ChEBI" id="CHEBI:28938"/>
        <dbReference type="ChEBI" id="CHEBI:29973"/>
        <dbReference type="ChEBI" id="CHEBI:30011"/>
        <dbReference type="EC" id="3.5.1.44"/>
    </reaction>
</comment>
<comment type="subcellular location">
    <subcellularLocation>
        <location evidence="1">Cytoplasm</location>
    </subcellularLocation>
</comment>
<comment type="domain">
    <text evidence="1">Contains a C-terminal catalytic domain, and an N-terminal region which modulates catalytic activity.</text>
</comment>
<comment type="PTM">
    <text evidence="1">Phosphorylated by CheA. Phosphorylation of the N-terminal regulatory domain activates the methylesterase activity.</text>
</comment>
<comment type="similarity">
    <text evidence="1">Belongs to the CheB family.</text>
</comment>
<name>CHEB_CALS4</name>
<dbReference type="EC" id="3.1.1.61" evidence="1"/>
<dbReference type="EC" id="3.5.1.44" evidence="1"/>
<dbReference type="EMBL" id="AE008691">
    <property type="protein sequence ID" value="AAM24289.1"/>
    <property type="molecule type" value="Genomic_DNA"/>
</dbReference>
<dbReference type="RefSeq" id="WP_011025403.1">
    <property type="nucleotide sequence ID" value="NC_003869.1"/>
</dbReference>
<dbReference type="SMR" id="Q8RAZ3"/>
<dbReference type="STRING" id="273068.TTE1035"/>
<dbReference type="KEGG" id="tte:TTE1035"/>
<dbReference type="eggNOG" id="COG2201">
    <property type="taxonomic scope" value="Bacteria"/>
</dbReference>
<dbReference type="HOGENOM" id="CLU_000445_51_0_9"/>
<dbReference type="OrthoDB" id="9793421at2"/>
<dbReference type="Proteomes" id="UP000000555">
    <property type="component" value="Chromosome"/>
</dbReference>
<dbReference type="GO" id="GO:0005737">
    <property type="term" value="C:cytoplasm"/>
    <property type="evidence" value="ECO:0007669"/>
    <property type="project" value="UniProtKB-SubCell"/>
</dbReference>
<dbReference type="GO" id="GO:0000156">
    <property type="term" value="F:phosphorelay response regulator activity"/>
    <property type="evidence" value="ECO:0007669"/>
    <property type="project" value="InterPro"/>
</dbReference>
<dbReference type="GO" id="GO:0008984">
    <property type="term" value="F:protein-glutamate methylesterase activity"/>
    <property type="evidence" value="ECO:0007669"/>
    <property type="project" value="UniProtKB-UniRule"/>
</dbReference>
<dbReference type="GO" id="GO:0050568">
    <property type="term" value="F:protein-glutamine glutaminase activity"/>
    <property type="evidence" value="ECO:0007669"/>
    <property type="project" value="UniProtKB-UniRule"/>
</dbReference>
<dbReference type="GO" id="GO:0006935">
    <property type="term" value="P:chemotaxis"/>
    <property type="evidence" value="ECO:0007669"/>
    <property type="project" value="UniProtKB-UniRule"/>
</dbReference>
<dbReference type="CDD" id="cd16432">
    <property type="entry name" value="CheB_Rec"/>
    <property type="match status" value="1"/>
</dbReference>
<dbReference type="CDD" id="cd17541">
    <property type="entry name" value="REC_CheB-like"/>
    <property type="match status" value="1"/>
</dbReference>
<dbReference type="Gene3D" id="3.40.50.2300">
    <property type="match status" value="1"/>
</dbReference>
<dbReference type="Gene3D" id="3.40.50.180">
    <property type="entry name" value="Methylesterase CheB, C-terminal domain"/>
    <property type="match status" value="1"/>
</dbReference>
<dbReference type="HAMAP" id="MF_00099">
    <property type="entry name" value="CheB_chemtxs"/>
    <property type="match status" value="1"/>
</dbReference>
<dbReference type="InterPro" id="IPR008248">
    <property type="entry name" value="CheB-like"/>
</dbReference>
<dbReference type="InterPro" id="IPR035909">
    <property type="entry name" value="CheB_C"/>
</dbReference>
<dbReference type="InterPro" id="IPR011006">
    <property type="entry name" value="CheY-like_superfamily"/>
</dbReference>
<dbReference type="InterPro" id="IPR000673">
    <property type="entry name" value="Sig_transdc_resp-reg_Me-estase"/>
</dbReference>
<dbReference type="InterPro" id="IPR001789">
    <property type="entry name" value="Sig_transdc_resp-reg_receiver"/>
</dbReference>
<dbReference type="NCBIfam" id="NF001965">
    <property type="entry name" value="PRK00742.1"/>
    <property type="match status" value="1"/>
</dbReference>
<dbReference type="NCBIfam" id="NF009206">
    <property type="entry name" value="PRK12555.1"/>
    <property type="match status" value="1"/>
</dbReference>
<dbReference type="PANTHER" id="PTHR42872">
    <property type="entry name" value="PROTEIN-GLUTAMATE METHYLESTERASE/PROTEIN-GLUTAMINE GLUTAMINASE"/>
    <property type="match status" value="1"/>
</dbReference>
<dbReference type="PANTHER" id="PTHR42872:SF6">
    <property type="entry name" value="PROTEIN-GLUTAMATE METHYLESTERASE_PROTEIN-GLUTAMINE GLUTAMINASE"/>
    <property type="match status" value="1"/>
</dbReference>
<dbReference type="Pfam" id="PF01339">
    <property type="entry name" value="CheB_methylest"/>
    <property type="match status" value="1"/>
</dbReference>
<dbReference type="Pfam" id="PF00072">
    <property type="entry name" value="Response_reg"/>
    <property type="match status" value="1"/>
</dbReference>
<dbReference type="PIRSF" id="PIRSF000876">
    <property type="entry name" value="RR_chemtxs_CheB"/>
    <property type="match status" value="1"/>
</dbReference>
<dbReference type="SMART" id="SM00448">
    <property type="entry name" value="REC"/>
    <property type="match status" value="1"/>
</dbReference>
<dbReference type="SUPFAM" id="SSF52172">
    <property type="entry name" value="CheY-like"/>
    <property type="match status" value="1"/>
</dbReference>
<dbReference type="SUPFAM" id="SSF52738">
    <property type="entry name" value="Methylesterase CheB, C-terminal domain"/>
    <property type="match status" value="1"/>
</dbReference>
<dbReference type="PROSITE" id="PS50122">
    <property type="entry name" value="CHEB"/>
    <property type="match status" value="1"/>
</dbReference>
<dbReference type="PROSITE" id="PS50110">
    <property type="entry name" value="RESPONSE_REGULATORY"/>
    <property type="match status" value="1"/>
</dbReference>
<sequence length="367" mass="40350">MKKKIRVLVVDDSAFMRRCLKDILENEEDMEVIDTARDGNEAVKKAVELRPDVITLDINMPVMDGLTALQYIMSLAPCPVVIISSLSTEGALTTFEALELGAVDFVAKPGGTVSLGIKQLADEIVSKVRIAALSNKELLSSSRNFKKLLKRRNQEVTRKVYENKISKKEIVVVIGVSTGGPKTLMEILPYLPSDFPAAVLVVQHMPPGFTQSFAQRLDQSCNLKVKEAEDKAFIEPGTVIIAKGGWHLVVERDSRSSKLITRLTQKPEETLYKPSINVTMKSVLENVDGRNIIGILLTGMGDDGADMMVEIRKRGGLTIAESQETAIVYGMPRAAVERGGAEIVAPAYKISDILLKKVNEYARTSEY</sequence>
<gene>
    <name evidence="1" type="primary">cheB</name>
    <name type="ordered locus">TTE1035</name>
</gene>
<reference key="1">
    <citation type="journal article" date="2002" name="Genome Res.">
        <title>A complete sequence of the T. tengcongensis genome.</title>
        <authorList>
            <person name="Bao Q."/>
            <person name="Tian Y."/>
            <person name="Li W."/>
            <person name="Xu Z."/>
            <person name="Xuan Z."/>
            <person name="Hu S."/>
            <person name="Dong W."/>
            <person name="Yang J."/>
            <person name="Chen Y."/>
            <person name="Xue Y."/>
            <person name="Xu Y."/>
            <person name="Lai X."/>
            <person name="Huang L."/>
            <person name="Dong X."/>
            <person name="Ma Y."/>
            <person name="Ling L."/>
            <person name="Tan H."/>
            <person name="Chen R."/>
            <person name="Wang J."/>
            <person name="Yu J."/>
            <person name="Yang H."/>
        </authorList>
    </citation>
    <scope>NUCLEOTIDE SEQUENCE [LARGE SCALE GENOMIC DNA]</scope>
    <source>
        <strain>DSM 15242 / JCM 11007 / NBRC 100824 / MB4</strain>
    </source>
</reference>
<proteinExistence type="inferred from homology"/>
<accession>Q8RAZ3</accession>
<organism>
    <name type="scientific">Caldanaerobacter subterraneus subsp. tengcongensis (strain DSM 15242 / JCM 11007 / NBRC 100824 / MB4)</name>
    <name type="common">Thermoanaerobacter tengcongensis</name>
    <dbReference type="NCBI Taxonomy" id="273068"/>
    <lineage>
        <taxon>Bacteria</taxon>
        <taxon>Bacillati</taxon>
        <taxon>Bacillota</taxon>
        <taxon>Clostridia</taxon>
        <taxon>Thermoanaerobacterales</taxon>
        <taxon>Thermoanaerobacteraceae</taxon>
        <taxon>Caldanaerobacter</taxon>
    </lineage>
</organism>
<feature type="chain" id="PRO_0000158033" description="Protein-glutamate methylesterase/protein-glutamine glutaminase">
    <location>
        <begin position="1"/>
        <end position="367"/>
    </location>
</feature>
<feature type="domain" description="Response regulatory" evidence="1">
    <location>
        <begin position="6"/>
        <end position="123"/>
    </location>
</feature>
<feature type="domain" description="CheB-type methylesterase" evidence="1">
    <location>
        <begin position="165"/>
        <end position="361"/>
    </location>
</feature>
<feature type="active site" evidence="1">
    <location>
        <position position="177"/>
    </location>
</feature>
<feature type="active site" evidence="1">
    <location>
        <position position="204"/>
    </location>
</feature>
<feature type="active site" evidence="1">
    <location>
        <position position="303"/>
    </location>
</feature>
<feature type="modified residue" description="4-aspartylphosphate" evidence="1">
    <location>
        <position position="57"/>
    </location>
</feature>
<evidence type="ECO:0000255" key="1">
    <source>
        <dbReference type="HAMAP-Rule" id="MF_00099"/>
    </source>
</evidence>
<keyword id="KW-0145">Chemotaxis</keyword>
<keyword id="KW-0963">Cytoplasm</keyword>
<keyword id="KW-0378">Hydrolase</keyword>
<keyword id="KW-0597">Phosphoprotein</keyword>
<keyword id="KW-1185">Reference proteome</keyword>